<comment type="function">
    <text evidence="1">Rho GTPase-activating protein involved in the signal transduction pathway.</text>
</comment>
<comment type="subcellular location">
    <subcellularLocation>
        <location evidence="1">Cytoplasm</location>
    </subcellularLocation>
</comment>
<gene>
    <name type="primary">gacW</name>
    <name type="ORF">DDB_G0290439</name>
</gene>
<reference key="1">
    <citation type="journal article" date="2005" name="Nature">
        <title>The genome of the social amoeba Dictyostelium discoideum.</title>
        <authorList>
            <person name="Eichinger L."/>
            <person name="Pachebat J.A."/>
            <person name="Gloeckner G."/>
            <person name="Rajandream M.A."/>
            <person name="Sucgang R."/>
            <person name="Berriman M."/>
            <person name="Song J."/>
            <person name="Olsen R."/>
            <person name="Szafranski K."/>
            <person name="Xu Q."/>
            <person name="Tunggal B."/>
            <person name="Kummerfeld S."/>
            <person name="Madera M."/>
            <person name="Konfortov B.A."/>
            <person name="Rivero F."/>
            <person name="Bankier A.T."/>
            <person name="Lehmann R."/>
            <person name="Hamlin N."/>
            <person name="Davies R."/>
            <person name="Gaudet P."/>
            <person name="Fey P."/>
            <person name="Pilcher K."/>
            <person name="Chen G."/>
            <person name="Saunders D."/>
            <person name="Sodergren E.J."/>
            <person name="Davis P."/>
            <person name="Kerhornou A."/>
            <person name="Nie X."/>
            <person name="Hall N."/>
            <person name="Anjard C."/>
            <person name="Hemphill L."/>
            <person name="Bason N."/>
            <person name="Farbrother P."/>
            <person name="Desany B."/>
            <person name="Just E."/>
            <person name="Morio T."/>
            <person name="Rost R."/>
            <person name="Churcher C.M."/>
            <person name="Cooper J."/>
            <person name="Haydock S."/>
            <person name="van Driessche N."/>
            <person name="Cronin A."/>
            <person name="Goodhead I."/>
            <person name="Muzny D.M."/>
            <person name="Mourier T."/>
            <person name="Pain A."/>
            <person name="Lu M."/>
            <person name="Harper D."/>
            <person name="Lindsay R."/>
            <person name="Hauser H."/>
            <person name="James K.D."/>
            <person name="Quiles M."/>
            <person name="Madan Babu M."/>
            <person name="Saito T."/>
            <person name="Buchrieser C."/>
            <person name="Wardroper A."/>
            <person name="Felder M."/>
            <person name="Thangavelu M."/>
            <person name="Johnson D."/>
            <person name="Knights A."/>
            <person name="Loulseged H."/>
            <person name="Mungall K.L."/>
            <person name="Oliver K."/>
            <person name="Price C."/>
            <person name="Quail M.A."/>
            <person name="Urushihara H."/>
            <person name="Hernandez J."/>
            <person name="Rabbinowitsch E."/>
            <person name="Steffen D."/>
            <person name="Sanders M."/>
            <person name="Ma J."/>
            <person name="Kohara Y."/>
            <person name="Sharp S."/>
            <person name="Simmonds M.N."/>
            <person name="Spiegler S."/>
            <person name="Tivey A."/>
            <person name="Sugano S."/>
            <person name="White B."/>
            <person name="Walker D."/>
            <person name="Woodward J.R."/>
            <person name="Winckler T."/>
            <person name="Tanaka Y."/>
            <person name="Shaulsky G."/>
            <person name="Schleicher M."/>
            <person name="Weinstock G.M."/>
            <person name="Rosenthal A."/>
            <person name="Cox E.C."/>
            <person name="Chisholm R.L."/>
            <person name="Gibbs R.A."/>
            <person name="Loomis W.F."/>
            <person name="Platzer M."/>
            <person name="Kay R.R."/>
            <person name="Williams J.G."/>
            <person name="Dear P.H."/>
            <person name="Noegel A.A."/>
            <person name="Barrell B.G."/>
            <person name="Kuspa A."/>
        </authorList>
    </citation>
    <scope>NUCLEOTIDE SEQUENCE [LARGE SCALE GENOMIC DNA]</scope>
    <source>
        <strain>AX4</strain>
    </source>
</reference>
<dbReference type="EMBL" id="AAFI02000163">
    <property type="protein sequence ID" value="EAL62235.1"/>
    <property type="molecule type" value="Genomic_DNA"/>
</dbReference>
<dbReference type="RefSeq" id="XP_635754.1">
    <property type="nucleotide sequence ID" value="XM_630662.1"/>
</dbReference>
<dbReference type="SMR" id="Q54G18"/>
<dbReference type="FunCoup" id="Q54G18">
    <property type="interactions" value="4"/>
</dbReference>
<dbReference type="STRING" id="44689.Q54G18"/>
<dbReference type="GlyGen" id="Q54G18">
    <property type="glycosylation" value="1 site"/>
</dbReference>
<dbReference type="PaxDb" id="44689-DDB0233787"/>
<dbReference type="EnsemblProtists" id="EAL62235">
    <property type="protein sequence ID" value="EAL62235"/>
    <property type="gene ID" value="DDB_G0290439"/>
</dbReference>
<dbReference type="GeneID" id="8627673"/>
<dbReference type="KEGG" id="ddi:DDB_G0290439"/>
<dbReference type="dictyBase" id="DDB_G0290439">
    <property type="gene designation" value="gacW"/>
</dbReference>
<dbReference type="VEuPathDB" id="AmoebaDB:DDB_G0290439"/>
<dbReference type="eggNOG" id="KOG4242">
    <property type="taxonomic scope" value="Eukaryota"/>
</dbReference>
<dbReference type="eggNOG" id="KOG4271">
    <property type="taxonomic scope" value="Eukaryota"/>
</dbReference>
<dbReference type="HOGENOM" id="CLU_281243_0_0_1"/>
<dbReference type="InParanoid" id="Q54G18"/>
<dbReference type="OMA" id="CEIMYPN"/>
<dbReference type="PhylomeDB" id="Q54G18"/>
<dbReference type="PRO" id="PR:Q54G18"/>
<dbReference type="Proteomes" id="UP000002195">
    <property type="component" value="Chromosome 5"/>
</dbReference>
<dbReference type="GO" id="GO:0031252">
    <property type="term" value="C:cell leading edge"/>
    <property type="evidence" value="ECO:0000314"/>
    <property type="project" value="dictyBase"/>
</dbReference>
<dbReference type="GO" id="GO:0005737">
    <property type="term" value="C:cytoplasm"/>
    <property type="evidence" value="ECO:0007669"/>
    <property type="project" value="UniProtKB-SubCell"/>
</dbReference>
<dbReference type="GO" id="GO:0030027">
    <property type="term" value="C:lamellipodium"/>
    <property type="evidence" value="ECO:0000318"/>
    <property type="project" value="GO_Central"/>
</dbReference>
<dbReference type="GO" id="GO:0001891">
    <property type="term" value="C:phagocytic cup"/>
    <property type="evidence" value="ECO:0000314"/>
    <property type="project" value="dictyBase"/>
</dbReference>
<dbReference type="GO" id="GO:0005886">
    <property type="term" value="C:plasma membrane"/>
    <property type="evidence" value="ECO:0000318"/>
    <property type="project" value="GO_Central"/>
</dbReference>
<dbReference type="GO" id="GO:0005096">
    <property type="term" value="F:GTPase activator activity"/>
    <property type="evidence" value="ECO:0000314"/>
    <property type="project" value="dictyBase"/>
</dbReference>
<dbReference type="GO" id="GO:0016477">
    <property type="term" value="P:cell migration"/>
    <property type="evidence" value="ECO:0000318"/>
    <property type="project" value="GO_Central"/>
</dbReference>
<dbReference type="GO" id="GO:0032956">
    <property type="term" value="P:regulation of actin cytoskeleton organization"/>
    <property type="evidence" value="ECO:0000315"/>
    <property type="project" value="dictyBase"/>
</dbReference>
<dbReference type="GO" id="GO:0060176">
    <property type="term" value="P:regulation of aggregation involved in sorocarp development"/>
    <property type="evidence" value="ECO:0000315"/>
    <property type="project" value="dictyBase"/>
</dbReference>
<dbReference type="GO" id="GO:0034315">
    <property type="term" value="P:regulation of Arp2/3 complex-mediated actin nucleation"/>
    <property type="evidence" value="ECO:0000318"/>
    <property type="project" value="GO_Central"/>
</dbReference>
<dbReference type="GO" id="GO:0030334">
    <property type="term" value="P:regulation of cell migration"/>
    <property type="evidence" value="ECO:0000315"/>
    <property type="project" value="dictyBase"/>
</dbReference>
<dbReference type="GO" id="GO:0050764">
    <property type="term" value="P:regulation of phagocytosis"/>
    <property type="evidence" value="ECO:0000315"/>
    <property type="project" value="dictyBase"/>
</dbReference>
<dbReference type="GO" id="GO:0007165">
    <property type="term" value="P:signal transduction"/>
    <property type="evidence" value="ECO:0007669"/>
    <property type="project" value="InterPro"/>
</dbReference>
<dbReference type="CDD" id="cd00159">
    <property type="entry name" value="RhoGAP"/>
    <property type="match status" value="1"/>
</dbReference>
<dbReference type="Gene3D" id="2.30.29.30">
    <property type="entry name" value="Pleckstrin-homology domain (PH domain)/Phosphotyrosine-binding domain (PTB)"/>
    <property type="match status" value="1"/>
</dbReference>
<dbReference type="Gene3D" id="1.10.555.10">
    <property type="entry name" value="Rho GTPase activation protein"/>
    <property type="match status" value="1"/>
</dbReference>
<dbReference type="Gene3D" id="3.80.10.10">
    <property type="entry name" value="Ribonuclease Inhibitor"/>
    <property type="match status" value="1"/>
</dbReference>
<dbReference type="InterPro" id="IPR041245">
    <property type="entry name" value="CARMIL_PH"/>
</dbReference>
<dbReference type="InterPro" id="IPR001611">
    <property type="entry name" value="Leu-rich_rpt"/>
</dbReference>
<dbReference type="InterPro" id="IPR032675">
    <property type="entry name" value="LRR_dom_sf"/>
</dbReference>
<dbReference type="InterPro" id="IPR011993">
    <property type="entry name" value="PH-like_dom_sf"/>
</dbReference>
<dbReference type="InterPro" id="IPR051279">
    <property type="entry name" value="PP1-Reg/Actin-Interact_Protein"/>
</dbReference>
<dbReference type="InterPro" id="IPR008936">
    <property type="entry name" value="Rho_GTPase_activation_prot"/>
</dbReference>
<dbReference type="InterPro" id="IPR000198">
    <property type="entry name" value="RhoGAP_dom"/>
</dbReference>
<dbReference type="PANTHER" id="PTHR24112">
    <property type="entry name" value="LEUCINE-RICH REPEAT, ISOFORM F-RELATED"/>
    <property type="match status" value="1"/>
</dbReference>
<dbReference type="PANTHER" id="PTHR24112:SF67">
    <property type="entry name" value="RHO GTPASE-ACTIVATING PROTEIN GACW"/>
    <property type="match status" value="1"/>
</dbReference>
<dbReference type="Pfam" id="PF17888">
    <property type="entry name" value="Carm_PH"/>
    <property type="match status" value="1"/>
</dbReference>
<dbReference type="Pfam" id="PF13516">
    <property type="entry name" value="LRR_6"/>
    <property type="match status" value="2"/>
</dbReference>
<dbReference type="Pfam" id="PF00620">
    <property type="entry name" value="RhoGAP"/>
    <property type="match status" value="1"/>
</dbReference>
<dbReference type="SMART" id="SM00368">
    <property type="entry name" value="LRR_RI"/>
    <property type="match status" value="3"/>
</dbReference>
<dbReference type="SMART" id="SM00324">
    <property type="entry name" value="RhoGAP"/>
    <property type="match status" value="1"/>
</dbReference>
<dbReference type="SUPFAM" id="SSF48350">
    <property type="entry name" value="GTPase activation domain, GAP"/>
    <property type="match status" value="1"/>
</dbReference>
<dbReference type="SUPFAM" id="SSF52047">
    <property type="entry name" value="RNI-like"/>
    <property type="match status" value="1"/>
</dbReference>
<dbReference type="PROSITE" id="PS50238">
    <property type="entry name" value="RHOGAP"/>
    <property type="match status" value="1"/>
</dbReference>
<sequence length="1115" mass="121786">MTTPVSLSQVEKKTIESILTNKKEEGKLITKVTILNEKKKKLEIKTLILSSNRIFLFTDSKGKLSAEHHYLEITEIASQSENDVTIKFKNQNVMKMNLDASEVLKTLYGTLMSTFPGIKIGKTIIFNITPASRIPSIFQATSFKDIQGCGSFNLTYRSVCDHLGVQPLSSILWDIENLYPFNQVREFNLAEIYQYSFTDLKAILLSLSYNTYFQSFQSNGKLSNEDLNLLAEVFKENSSLQQLTITNSQASKEPIITLLQNVAENKALHLSHINLNNNSLENKGILTLGSSIQTFSNGLTYLNIENTSCSGKGLEAMFGCLTANNVVCGSMTHLNISNNKLESYGTNGLCKFLSKATALQQLLMSNTSPVYSFLKTSSSSIQTLDFSGNKSTTTKESVIDILSFFKQMSHLQTVNLSRIQTTPDDLKLLFSPATSLLKCSSVDLSENDLGDGGIIKLCEIMYPNSNLHHLSIDGNFKTKSKLRARAIEALINLIDDNTSIESLSLASGSGKYQLKGDLMPLLLSLLKNQSLVKLDISGNGVGDSGALAVSKILWKNQTLKSLKCDGNDFSYTALKMIKCSIRRNEKSLTILQLPLSDISTILKNDSNGSSHEKILKTIQDIQTSIVINYPNNIHPIDTSSGGLTPTKQPSIGSLAGVIKKPPIGPPSTPTKSSNPGFQTLPKRPTRGPLYPGRATGGAVTLTDKAQINASTIELPPLVSRSIDLLMEQGISSVGIFRTCASATALKKIKTRFEAGEDIDLKAENVDVDTVAGVLKSYFRELPNPIFPENLHEYFFQAMRQSSNEEIIQSLKDIIDQLSPLECKMIKKLFHLLHLISLEKDVNMMSPENIAICWAPTFFRSFASELLPINSFMIVNYFDIFDPENKPISSDNSGDADTDSTQSTCTTNNNNLVATSLSSPISPSTTPTKSIDNVLHTTVEVSRSPNHERAHTVGPMTSKRPISNNNGVSSNTPPLPNNVTPHHNTMPSRPSASPIKRPPSMGGSLSNFAGIPLSNHSSSGQLNNNNSNNNTTSNSSNSSSGKSSSNPSPIPTPPDSPSMSYIGDGKSTLRSKRFSRVNRVSYSPVLPRAWTNESRTVSSLFQDDLDSNSDSSGPSL</sequence>
<organism>
    <name type="scientific">Dictyostelium discoideum</name>
    <name type="common">Social amoeba</name>
    <dbReference type="NCBI Taxonomy" id="44689"/>
    <lineage>
        <taxon>Eukaryota</taxon>
        <taxon>Amoebozoa</taxon>
        <taxon>Evosea</taxon>
        <taxon>Eumycetozoa</taxon>
        <taxon>Dictyostelia</taxon>
        <taxon>Dictyosteliales</taxon>
        <taxon>Dictyosteliaceae</taxon>
        <taxon>Dictyostelium</taxon>
    </lineage>
</organism>
<keyword id="KW-0963">Cytoplasm</keyword>
<keyword id="KW-0343">GTPase activation</keyword>
<keyword id="KW-1185">Reference proteome</keyword>
<name>GACW_DICDI</name>
<evidence type="ECO:0000250" key="1"/>
<evidence type="ECO:0000255" key="2">
    <source>
        <dbReference type="PROSITE-ProRule" id="PRU00172"/>
    </source>
</evidence>
<evidence type="ECO:0000256" key="3">
    <source>
        <dbReference type="SAM" id="MobiDB-lite"/>
    </source>
</evidence>
<protein>
    <recommendedName>
        <fullName>Rho GTPase-activating protein gacW</fullName>
    </recommendedName>
    <alternativeName>
        <fullName>GTPase activating factor for raC protein W</fullName>
    </alternativeName>
</protein>
<accession>Q54G18</accession>
<proteinExistence type="inferred from homology"/>
<feature type="chain" id="PRO_0000380220" description="Rho GTPase-activating protein gacW">
    <location>
        <begin position="1"/>
        <end position="1115"/>
    </location>
</feature>
<feature type="domain" description="Rho-GAP" evidence="2">
    <location>
        <begin position="699"/>
        <end position="880"/>
    </location>
</feature>
<feature type="region of interest" description="Disordered" evidence="3">
    <location>
        <begin position="661"/>
        <end position="691"/>
    </location>
</feature>
<feature type="region of interest" description="Disordered" evidence="3">
    <location>
        <begin position="888"/>
        <end position="1065"/>
    </location>
</feature>
<feature type="region of interest" description="Disordered" evidence="3">
    <location>
        <begin position="1092"/>
        <end position="1115"/>
    </location>
</feature>
<feature type="compositionally biased region" description="Low complexity" evidence="3">
    <location>
        <begin position="898"/>
        <end position="929"/>
    </location>
</feature>
<feature type="compositionally biased region" description="Polar residues" evidence="3">
    <location>
        <begin position="934"/>
        <end position="943"/>
    </location>
</feature>
<feature type="compositionally biased region" description="Polar residues" evidence="3">
    <location>
        <begin position="959"/>
        <end position="990"/>
    </location>
</feature>
<feature type="compositionally biased region" description="Low complexity" evidence="3">
    <location>
        <begin position="1013"/>
        <end position="1046"/>
    </location>
</feature>
<feature type="site" description="Arginine finger; crucial for GTP hydrolysis by stabilizing the transition state" evidence="2">
    <location>
        <position position="737"/>
    </location>
</feature>